<sequence>MKRLWKKVGSGVKNANYLKKSVEEVAKIEKGETKVVPPKYPTEKSREVSEEIKKELAMKNESLVENMNKMYIKSTDPVERWTSTKDLPTRESEFLHRNDPIWEYGFYEPPVERIPKDKLMFKEALEYLRFRQELLSDSSSPAQKKQAAEFVADHVVTSRVNAETLDDIYEYFRPFERKDKQKVVNRHALAALQDHVQGNSDERRILDEAKDVGKKIRHISNNTKFLDEYQRLEDEEKDKVREAIAQLRQEEHERLNKRLGQLGEIEKTAQEAMKKAVEEKKEK</sequence>
<proteinExistence type="predicted"/>
<reference key="1">
    <citation type="journal article" date="1998" name="Science">
        <title>Genome sequence of the nematode C. elegans: a platform for investigating biology.</title>
        <authorList>
            <consortium name="The C. elegans sequencing consortium"/>
        </authorList>
    </citation>
    <scope>NUCLEOTIDE SEQUENCE [LARGE SCALE GENOMIC DNA]</scope>
    <source>
        <strain>Bristol N2</strain>
    </source>
</reference>
<dbReference type="EMBL" id="Z73102">
    <property type="protein sequence ID" value="CAA97417.1"/>
    <property type="molecule type" value="Genomic_DNA"/>
</dbReference>
<dbReference type="PIR" id="T18662">
    <property type="entry name" value="T18662"/>
</dbReference>
<dbReference type="RefSeq" id="NP_502121.1">
    <property type="nucleotide sequence ID" value="NM_069720.6"/>
</dbReference>
<dbReference type="BioGRID" id="43138">
    <property type="interactions" value="1"/>
</dbReference>
<dbReference type="FunCoup" id="Q17439">
    <property type="interactions" value="320"/>
</dbReference>
<dbReference type="STRING" id="6239.B0035.15.1"/>
<dbReference type="iPTMnet" id="Q17439"/>
<dbReference type="PaxDb" id="6239-B0035.15"/>
<dbReference type="PeptideAtlas" id="Q17439"/>
<dbReference type="EnsemblMetazoa" id="B0035.15.1">
    <property type="protein sequence ID" value="B0035.15.1"/>
    <property type="gene ID" value="WBGene00007113"/>
</dbReference>
<dbReference type="GeneID" id="178039"/>
<dbReference type="KEGG" id="cel:CELE_B0035.15"/>
<dbReference type="UCSC" id="B0035.15">
    <property type="organism name" value="c. elegans"/>
</dbReference>
<dbReference type="AGR" id="WB:WBGene00007113"/>
<dbReference type="CTD" id="178039"/>
<dbReference type="WormBase" id="B0035.15">
    <property type="protein sequence ID" value="CE05170"/>
    <property type="gene ID" value="WBGene00007113"/>
</dbReference>
<dbReference type="eggNOG" id="KOG4481">
    <property type="taxonomic scope" value="Eukaryota"/>
</dbReference>
<dbReference type="GeneTree" id="ENSGT00390000001627"/>
<dbReference type="HOGENOM" id="CLU_085840_0_0_1"/>
<dbReference type="InParanoid" id="Q17439"/>
<dbReference type="OMA" id="PKDKLMF"/>
<dbReference type="OrthoDB" id="5862942at2759"/>
<dbReference type="PhylomeDB" id="Q17439"/>
<dbReference type="Reactome" id="R-CEL-6799198">
    <property type="pathway name" value="Complex I biogenesis"/>
</dbReference>
<dbReference type="PRO" id="PR:Q17439"/>
<dbReference type="Proteomes" id="UP000001940">
    <property type="component" value="Chromosome IV"/>
</dbReference>
<dbReference type="Bgee" id="WBGene00007113">
    <property type="expression patterns" value="Expressed in germ line (C elegans) and 4 other cell types or tissues"/>
</dbReference>
<dbReference type="GO" id="GO:0005739">
    <property type="term" value="C:mitochondrion"/>
    <property type="evidence" value="ECO:0007005"/>
    <property type="project" value="WormBase"/>
</dbReference>
<dbReference type="GO" id="GO:0032981">
    <property type="term" value="P:mitochondrial respiratory chain complex I assembly"/>
    <property type="evidence" value="ECO:0000318"/>
    <property type="project" value="GO_Central"/>
</dbReference>
<dbReference type="InterPro" id="IPR009622">
    <property type="entry name" value="NDUFAF4"/>
</dbReference>
<dbReference type="PANTHER" id="PTHR13338:SF4">
    <property type="entry name" value="NADH DEHYDROGENASE [UBIQUINONE] 1 ALPHA SUBCOMPLEX ASSEMBLY FACTOR 4"/>
    <property type="match status" value="1"/>
</dbReference>
<dbReference type="PANTHER" id="PTHR13338">
    <property type="entry name" value="UPF0240 PROTEIN"/>
    <property type="match status" value="1"/>
</dbReference>
<dbReference type="Pfam" id="PF06784">
    <property type="entry name" value="UPF0240"/>
    <property type="match status" value="1"/>
</dbReference>
<gene>
    <name type="ORF">B0035.15</name>
</gene>
<protein>
    <recommendedName>
        <fullName>Uncharacterized protein B0035.15</fullName>
    </recommendedName>
</protein>
<name>YQVW_CAEEL</name>
<keyword id="KW-1185">Reference proteome</keyword>
<feature type="chain" id="PRO_0000065044" description="Uncharacterized protein B0035.15">
    <location>
        <begin position="1"/>
        <end position="283"/>
    </location>
</feature>
<organism>
    <name type="scientific">Caenorhabditis elegans</name>
    <dbReference type="NCBI Taxonomy" id="6239"/>
    <lineage>
        <taxon>Eukaryota</taxon>
        <taxon>Metazoa</taxon>
        <taxon>Ecdysozoa</taxon>
        <taxon>Nematoda</taxon>
        <taxon>Chromadorea</taxon>
        <taxon>Rhabditida</taxon>
        <taxon>Rhabditina</taxon>
        <taxon>Rhabditomorpha</taxon>
        <taxon>Rhabditoidea</taxon>
        <taxon>Rhabditidae</taxon>
        <taxon>Peloderinae</taxon>
        <taxon>Caenorhabditis</taxon>
    </lineage>
</organism>
<accession>Q17439</accession>